<gene>
    <name evidence="1" type="primary">groES</name>
    <name evidence="1" type="synonym">groS</name>
    <name type="ordered locus">BAB2_0190</name>
</gene>
<reference key="1">
    <citation type="journal article" date="2005" name="Infect. Immun.">
        <title>Whole-genome analyses of speciation events in pathogenic Brucellae.</title>
        <authorList>
            <person name="Chain P.S."/>
            <person name="Comerci D.J."/>
            <person name="Tolmasky M.E."/>
            <person name="Larimer F.W."/>
            <person name="Malfatti S.A."/>
            <person name="Vergez L.M."/>
            <person name="Aguero F."/>
            <person name="Land M.L."/>
            <person name="Ugalde R.A."/>
            <person name="Garcia E."/>
        </authorList>
    </citation>
    <scope>NUCLEOTIDE SEQUENCE [LARGE SCALE GENOMIC DNA]</scope>
    <source>
        <strain>2308</strain>
    </source>
</reference>
<proteinExistence type="inferred from homology"/>
<name>CH10_BRUA2</name>
<feature type="chain" id="PRO_1000025222" description="Co-chaperonin GroES">
    <location>
        <begin position="1"/>
        <end position="98"/>
    </location>
</feature>
<evidence type="ECO:0000255" key="1">
    <source>
        <dbReference type="HAMAP-Rule" id="MF_00580"/>
    </source>
</evidence>
<keyword id="KW-0143">Chaperone</keyword>
<keyword id="KW-0963">Cytoplasm</keyword>
<keyword id="KW-1185">Reference proteome</keyword>
<protein>
    <recommendedName>
        <fullName evidence="1">Co-chaperonin GroES</fullName>
    </recommendedName>
    <alternativeName>
        <fullName evidence="1">10 kDa chaperonin</fullName>
    </alternativeName>
    <alternativeName>
        <fullName evidence="1">Chaperonin-10</fullName>
        <shortName evidence="1">Cpn10</shortName>
    </alternativeName>
</protein>
<sequence length="98" mass="10393">MADIKFRPLHDRVVVRRVESEAKTAGGIIIPDTAKEKPQEGEVVAAGAGARDEAGKLVPLDVKAGDRVLFGKWSGTEVKIGGEDLLIMKESDILGIVG</sequence>
<organism>
    <name type="scientific">Brucella abortus (strain 2308)</name>
    <dbReference type="NCBI Taxonomy" id="359391"/>
    <lineage>
        <taxon>Bacteria</taxon>
        <taxon>Pseudomonadati</taxon>
        <taxon>Pseudomonadota</taxon>
        <taxon>Alphaproteobacteria</taxon>
        <taxon>Hyphomicrobiales</taxon>
        <taxon>Brucellaceae</taxon>
        <taxon>Brucella/Ochrobactrum group</taxon>
        <taxon>Brucella</taxon>
    </lineage>
</organism>
<dbReference type="EMBL" id="AM040265">
    <property type="protein sequence ID" value="CAJ12356.1"/>
    <property type="molecule type" value="Genomic_DNA"/>
</dbReference>
<dbReference type="RefSeq" id="WP_002966386.1">
    <property type="nucleotide sequence ID" value="NZ_KN046823.1"/>
</dbReference>
<dbReference type="SMR" id="Q2YIJ2"/>
<dbReference type="STRING" id="359391.BAB2_0190"/>
<dbReference type="GeneID" id="97535613"/>
<dbReference type="KEGG" id="bmf:BAB2_0190"/>
<dbReference type="PATRIC" id="fig|359391.11.peg.2140"/>
<dbReference type="HOGENOM" id="CLU_132825_1_0_5"/>
<dbReference type="Proteomes" id="UP000002719">
    <property type="component" value="Chromosome II"/>
</dbReference>
<dbReference type="GO" id="GO:0005737">
    <property type="term" value="C:cytoplasm"/>
    <property type="evidence" value="ECO:0007669"/>
    <property type="project" value="UniProtKB-SubCell"/>
</dbReference>
<dbReference type="GO" id="GO:0005524">
    <property type="term" value="F:ATP binding"/>
    <property type="evidence" value="ECO:0007669"/>
    <property type="project" value="InterPro"/>
</dbReference>
<dbReference type="GO" id="GO:0046872">
    <property type="term" value="F:metal ion binding"/>
    <property type="evidence" value="ECO:0007669"/>
    <property type="project" value="TreeGrafter"/>
</dbReference>
<dbReference type="GO" id="GO:0044183">
    <property type="term" value="F:protein folding chaperone"/>
    <property type="evidence" value="ECO:0007669"/>
    <property type="project" value="InterPro"/>
</dbReference>
<dbReference type="GO" id="GO:0051087">
    <property type="term" value="F:protein-folding chaperone binding"/>
    <property type="evidence" value="ECO:0007669"/>
    <property type="project" value="TreeGrafter"/>
</dbReference>
<dbReference type="GO" id="GO:0051082">
    <property type="term" value="F:unfolded protein binding"/>
    <property type="evidence" value="ECO:0007669"/>
    <property type="project" value="TreeGrafter"/>
</dbReference>
<dbReference type="GO" id="GO:0051085">
    <property type="term" value="P:chaperone cofactor-dependent protein refolding"/>
    <property type="evidence" value="ECO:0007669"/>
    <property type="project" value="TreeGrafter"/>
</dbReference>
<dbReference type="CDD" id="cd00320">
    <property type="entry name" value="cpn10"/>
    <property type="match status" value="1"/>
</dbReference>
<dbReference type="FunFam" id="2.30.33.40:FF:000001">
    <property type="entry name" value="10 kDa chaperonin"/>
    <property type="match status" value="1"/>
</dbReference>
<dbReference type="Gene3D" id="2.30.33.40">
    <property type="entry name" value="GroES chaperonin"/>
    <property type="match status" value="1"/>
</dbReference>
<dbReference type="HAMAP" id="MF_00580">
    <property type="entry name" value="CH10"/>
    <property type="match status" value="1"/>
</dbReference>
<dbReference type="InterPro" id="IPR020818">
    <property type="entry name" value="Chaperonin_GroES"/>
</dbReference>
<dbReference type="InterPro" id="IPR037124">
    <property type="entry name" value="Chaperonin_GroES_sf"/>
</dbReference>
<dbReference type="InterPro" id="IPR018369">
    <property type="entry name" value="Chaprnonin_Cpn10_CS"/>
</dbReference>
<dbReference type="InterPro" id="IPR011032">
    <property type="entry name" value="GroES-like_sf"/>
</dbReference>
<dbReference type="NCBIfam" id="NF001527">
    <property type="entry name" value="PRK00364.1-2"/>
    <property type="match status" value="1"/>
</dbReference>
<dbReference type="NCBIfam" id="NF001529">
    <property type="entry name" value="PRK00364.1-5"/>
    <property type="match status" value="1"/>
</dbReference>
<dbReference type="NCBIfam" id="NF001531">
    <property type="entry name" value="PRK00364.2-2"/>
    <property type="match status" value="1"/>
</dbReference>
<dbReference type="NCBIfam" id="NF001533">
    <property type="entry name" value="PRK00364.2-4"/>
    <property type="match status" value="1"/>
</dbReference>
<dbReference type="NCBIfam" id="NF001534">
    <property type="entry name" value="PRK00364.2-5"/>
    <property type="match status" value="1"/>
</dbReference>
<dbReference type="PANTHER" id="PTHR10772">
    <property type="entry name" value="10 KDA HEAT SHOCK PROTEIN"/>
    <property type="match status" value="1"/>
</dbReference>
<dbReference type="PANTHER" id="PTHR10772:SF58">
    <property type="entry name" value="CO-CHAPERONIN GROES"/>
    <property type="match status" value="1"/>
</dbReference>
<dbReference type="Pfam" id="PF00166">
    <property type="entry name" value="Cpn10"/>
    <property type="match status" value="1"/>
</dbReference>
<dbReference type="PRINTS" id="PR00297">
    <property type="entry name" value="CHAPERONIN10"/>
</dbReference>
<dbReference type="SMART" id="SM00883">
    <property type="entry name" value="Cpn10"/>
    <property type="match status" value="1"/>
</dbReference>
<dbReference type="SUPFAM" id="SSF50129">
    <property type="entry name" value="GroES-like"/>
    <property type="match status" value="1"/>
</dbReference>
<dbReference type="PROSITE" id="PS00681">
    <property type="entry name" value="CHAPERONINS_CPN10"/>
    <property type="match status" value="1"/>
</dbReference>
<comment type="function">
    <text evidence="1">Together with the chaperonin GroEL, plays an essential role in assisting protein folding. The GroEL-GroES system forms a nano-cage that allows encapsulation of the non-native substrate proteins and provides a physical environment optimized to promote and accelerate protein folding. GroES binds to the apical surface of the GroEL ring, thereby capping the opening of the GroEL channel.</text>
</comment>
<comment type="subunit">
    <text evidence="1">Heptamer of 7 subunits arranged in a ring. Interacts with the chaperonin GroEL.</text>
</comment>
<comment type="subcellular location">
    <subcellularLocation>
        <location evidence="1">Cytoplasm</location>
    </subcellularLocation>
</comment>
<comment type="similarity">
    <text evidence="1">Belongs to the GroES chaperonin family.</text>
</comment>
<accession>Q2YIJ2</accession>